<reference key="1">
    <citation type="journal article" date="1986" name="J. Virol.">
        <title>Transcription initiation sites and nucleotide sequence of a herpes simplex virus 1 gene conserved in the Epstein-Barr virus genome and reported to affect the transport of viral glycoproteins.</title>
        <authorList>
            <person name="Pellett P.E."/>
            <person name="Jenkins F.J."/>
            <person name="Ackermann M."/>
            <person name="Sarmiento M."/>
            <person name="Roizman B."/>
        </authorList>
    </citation>
    <scope>NUCLEOTIDE SEQUENCE [GENOMIC DNA]</scope>
</reference>
<accession>P06490</accession>
<name>TRM1_HHV1F</name>
<comment type="function">
    <text evidence="1">Component of the molecular motor that translocates viral genomic DNA in empty capsid during DNA packaging. Forms a tripartite terminase complex together with TRM2 and TRM3 in the host cytoplasm. Once the complex reaches the host nucleus, it interacts with the capsid portal vertex. This portal forms a ring in which genomic DNA is translocated into the capsid. TRM1 carries an endonuclease activity that plays an important role for the cleavage of concatemeric viral DNA into unit length genomes.</text>
</comment>
<comment type="subunit">
    <text evidence="1">Associates with TRM2 and TRM3 to form the tripartite terminase complex. Interacts with portal protein.</text>
</comment>
<comment type="subcellular location">
    <subcellularLocation>
        <location evidence="1">Host nucleus</location>
    </subcellularLocation>
    <text evidence="1">Found associated with the external surface of the viral capsid during assembly and DNA packaging, but seems absent in extracellular mature virions.</text>
</comment>
<comment type="similarity">
    <text evidence="1">Belongs to the herpesviridae TRM1 protein family.</text>
</comment>
<organismHost>
    <name type="scientific">Homo sapiens</name>
    <name type="common">Human</name>
    <dbReference type="NCBI Taxonomy" id="9606"/>
</organismHost>
<dbReference type="EMBL" id="M14164">
    <property type="protein sequence ID" value="AAA45775.1"/>
    <property type="molecule type" value="Genomic_DNA"/>
</dbReference>
<dbReference type="PIR" id="A26101">
    <property type="entry name" value="WMBEH8"/>
</dbReference>
<dbReference type="SMR" id="P06490"/>
<dbReference type="GO" id="GO:0042025">
    <property type="term" value="C:host cell nucleus"/>
    <property type="evidence" value="ECO:0007669"/>
    <property type="project" value="UniProtKB-SubCell"/>
</dbReference>
<dbReference type="GO" id="GO:0005524">
    <property type="term" value="F:ATP binding"/>
    <property type="evidence" value="ECO:0007669"/>
    <property type="project" value="UniProtKB-KW"/>
</dbReference>
<dbReference type="GO" id="GO:0046872">
    <property type="term" value="F:metal ion binding"/>
    <property type="evidence" value="ECO:0007669"/>
    <property type="project" value="UniProtKB-KW"/>
</dbReference>
<dbReference type="GO" id="GO:0019073">
    <property type="term" value="P:viral DNA genome packaging"/>
    <property type="evidence" value="ECO:0007669"/>
    <property type="project" value="InterPro"/>
</dbReference>
<dbReference type="HAMAP" id="MF_04014">
    <property type="entry name" value="HSV_TRM1"/>
    <property type="match status" value="1"/>
</dbReference>
<dbReference type="InterPro" id="IPR000501">
    <property type="entry name" value="UL28/UL56"/>
</dbReference>
<dbReference type="Pfam" id="PF01366">
    <property type="entry name" value="PRTP"/>
    <property type="match status" value="1"/>
</dbReference>
<evidence type="ECO:0000255" key="1">
    <source>
        <dbReference type="HAMAP-Rule" id="MF_04014"/>
    </source>
</evidence>
<evidence type="ECO:0000256" key="2">
    <source>
        <dbReference type="SAM" id="MobiDB-lite"/>
    </source>
</evidence>
<gene>
    <name evidence="1" type="primary">TRM1</name>
    <name type="ordered locus">UL28</name>
</gene>
<sequence>MAAPVSEPTVARQKLLALLGQVQTYVFQIELLRRCDPHIGRGNAPPTEAERASGAGAAASSEAGPGGPAGAFLTPLSVTLELLLEYAWREGERLLGSLETFATAGDVAVFFTETMGLARPCPYHQRVRLDTYGGTVHMELCFLHDVENFLKQLNYCHLITPSRGATALERVREFMVGAVGSGLIVPPELSDPSHPCAVCFEELCVTANQGATIAAAWRTVSVTTSPSRRRCGWTPTSVRRYLPHAAGLSDADRAGALRVGPCAGPDRGGRRAAPPVAENDSVRKEADALLEAHDVFQATTPGLYAISELRFWLASGDRAGQTTMDAFASNLTALARELQQETAAVAVELALFGRRAEHFDRAFGSHLAALDMVDALIIGGQATSPDDQIEALIRACYDHHLTTPLLRRLVSPEQCDEEALRRVLARMGAGAGGPKGGAGPDDDGDRVAVEEGARGLGAPGGGGEDEAPSPRARGTGPETWGDIATQAAADVRERRRLYADRLTKRSLASLGRCVREQRGELEKMLRVSVHGEVLPATFAAVANGFAARALLAALTAGAGTVIDNRSAPGVFDAHRFMRASLLRHQVDPALLPSITHRFFELVNGPLFDHSTHSFAQPPNTALYYSVENVGLLPHLKEELARFIMGAGGSGADWAVSEFQRFYCFDGISGITPTQRAAWRYIRELIIATTLFASVYRCGELELRRPDCSRPTSEGRYRYPPGVYLTYDSDCPLVAIVESAPDGCIGPRSVVVYDRDVFSILYSVLQHLAPRLPDGGHDGPP</sequence>
<feature type="chain" id="PRO_0000115876" description="Tripartite terminase subunit 1">
    <location>
        <begin position="1"/>
        <end position="780"/>
    </location>
</feature>
<feature type="region of interest" description="Disordered" evidence="2">
    <location>
        <begin position="41"/>
        <end position="66"/>
    </location>
</feature>
<feature type="region of interest" description="Disordered" evidence="2">
    <location>
        <begin position="428"/>
        <end position="447"/>
    </location>
</feature>
<feature type="region of interest" description="Disordered" evidence="2">
    <location>
        <begin position="452"/>
        <end position="483"/>
    </location>
</feature>
<feature type="compositionally biased region" description="Low complexity" evidence="2">
    <location>
        <begin position="52"/>
        <end position="63"/>
    </location>
</feature>
<feature type="compositionally biased region" description="Gly residues" evidence="2">
    <location>
        <begin position="429"/>
        <end position="439"/>
    </location>
</feature>
<feature type="binding site" evidence="1">
    <location>
        <begin position="691"/>
        <end position="698"/>
    </location>
    <ligand>
        <name>ATP</name>
        <dbReference type="ChEBI" id="CHEBI:30616"/>
    </ligand>
</feature>
<proteinExistence type="inferred from homology"/>
<keyword id="KW-0067">ATP-binding</keyword>
<keyword id="KW-1048">Host nucleus</keyword>
<keyword id="KW-0426">Late protein</keyword>
<keyword id="KW-0479">Metal-binding</keyword>
<keyword id="KW-0547">Nucleotide-binding</keyword>
<keyword id="KW-0231">Viral genome packaging</keyword>
<keyword id="KW-1188">Viral release from host cell</keyword>
<protein>
    <recommendedName>
        <fullName evidence="1">Tripartite terminase subunit 1</fullName>
    </recommendedName>
</protein>
<organism>
    <name type="scientific">Human herpesvirus 1 (strain F)</name>
    <name type="common">HHV-1</name>
    <name type="synonym">Human herpes simplex virus 1</name>
    <dbReference type="NCBI Taxonomy" id="10304"/>
    <lineage>
        <taxon>Viruses</taxon>
        <taxon>Duplodnaviria</taxon>
        <taxon>Heunggongvirae</taxon>
        <taxon>Peploviricota</taxon>
        <taxon>Herviviricetes</taxon>
        <taxon>Herpesvirales</taxon>
        <taxon>Orthoherpesviridae</taxon>
        <taxon>Alphaherpesvirinae</taxon>
        <taxon>Simplexvirus</taxon>
        <taxon>Simplexvirus humanalpha1</taxon>
        <taxon>Human herpesvirus 1</taxon>
    </lineage>
</organism>